<evidence type="ECO:0000255" key="1">
    <source>
        <dbReference type="HAMAP-Rule" id="MF_00184"/>
    </source>
</evidence>
<evidence type="ECO:0000255" key="2">
    <source>
        <dbReference type="PROSITE-ProRule" id="PRU01228"/>
    </source>
</evidence>
<organism>
    <name type="scientific">Streptococcus pyogenes serotype M3 (strain SSI-1)</name>
    <dbReference type="NCBI Taxonomy" id="193567"/>
    <lineage>
        <taxon>Bacteria</taxon>
        <taxon>Bacillati</taxon>
        <taxon>Bacillota</taxon>
        <taxon>Bacilli</taxon>
        <taxon>Lactobacillales</taxon>
        <taxon>Streptococcaceae</taxon>
        <taxon>Streptococcus</taxon>
    </lineage>
</organism>
<dbReference type="EC" id="6.1.1.3" evidence="1"/>
<dbReference type="EMBL" id="BA000034">
    <property type="protein sequence ID" value="BAC64583.1"/>
    <property type="molecule type" value="Genomic_DNA"/>
</dbReference>
<dbReference type="RefSeq" id="WP_011054265.1">
    <property type="nucleotide sequence ID" value="NC_004606.1"/>
</dbReference>
<dbReference type="SMR" id="P0DG59"/>
<dbReference type="KEGG" id="sps:SPs1488"/>
<dbReference type="HOGENOM" id="CLU_008554_0_1_9"/>
<dbReference type="GO" id="GO:0005737">
    <property type="term" value="C:cytoplasm"/>
    <property type="evidence" value="ECO:0007669"/>
    <property type="project" value="UniProtKB-SubCell"/>
</dbReference>
<dbReference type="GO" id="GO:0005524">
    <property type="term" value="F:ATP binding"/>
    <property type="evidence" value="ECO:0007669"/>
    <property type="project" value="UniProtKB-UniRule"/>
</dbReference>
<dbReference type="GO" id="GO:0140096">
    <property type="term" value="F:catalytic activity, acting on a protein"/>
    <property type="evidence" value="ECO:0007669"/>
    <property type="project" value="UniProtKB-ARBA"/>
</dbReference>
<dbReference type="GO" id="GO:0046872">
    <property type="term" value="F:metal ion binding"/>
    <property type="evidence" value="ECO:0007669"/>
    <property type="project" value="UniProtKB-KW"/>
</dbReference>
<dbReference type="GO" id="GO:0004829">
    <property type="term" value="F:threonine-tRNA ligase activity"/>
    <property type="evidence" value="ECO:0007669"/>
    <property type="project" value="UniProtKB-UniRule"/>
</dbReference>
<dbReference type="GO" id="GO:0016740">
    <property type="term" value="F:transferase activity"/>
    <property type="evidence" value="ECO:0007669"/>
    <property type="project" value="UniProtKB-ARBA"/>
</dbReference>
<dbReference type="GO" id="GO:0000049">
    <property type="term" value="F:tRNA binding"/>
    <property type="evidence" value="ECO:0007669"/>
    <property type="project" value="UniProtKB-KW"/>
</dbReference>
<dbReference type="GO" id="GO:0006435">
    <property type="term" value="P:threonyl-tRNA aminoacylation"/>
    <property type="evidence" value="ECO:0007669"/>
    <property type="project" value="UniProtKB-UniRule"/>
</dbReference>
<dbReference type="CDD" id="cd01667">
    <property type="entry name" value="TGS_ThrRS"/>
    <property type="match status" value="1"/>
</dbReference>
<dbReference type="CDD" id="cd00860">
    <property type="entry name" value="ThrRS_anticodon"/>
    <property type="match status" value="1"/>
</dbReference>
<dbReference type="CDD" id="cd00771">
    <property type="entry name" value="ThrRS_core"/>
    <property type="match status" value="1"/>
</dbReference>
<dbReference type="FunFam" id="3.10.20.30:FF:000005">
    <property type="entry name" value="Threonine--tRNA ligase"/>
    <property type="match status" value="1"/>
</dbReference>
<dbReference type="FunFam" id="3.30.54.20:FF:000002">
    <property type="entry name" value="Threonine--tRNA ligase"/>
    <property type="match status" value="1"/>
</dbReference>
<dbReference type="FunFam" id="3.30.930.10:FF:000002">
    <property type="entry name" value="Threonine--tRNA ligase"/>
    <property type="match status" value="1"/>
</dbReference>
<dbReference type="FunFam" id="3.40.50.800:FF:000001">
    <property type="entry name" value="Threonine--tRNA ligase"/>
    <property type="match status" value="1"/>
</dbReference>
<dbReference type="FunFam" id="3.30.980.10:FF:000005">
    <property type="entry name" value="Threonyl-tRNA synthetase, mitochondrial"/>
    <property type="match status" value="1"/>
</dbReference>
<dbReference type="Gene3D" id="3.10.20.30">
    <property type="match status" value="1"/>
</dbReference>
<dbReference type="Gene3D" id="3.30.54.20">
    <property type="match status" value="1"/>
</dbReference>
<dbReference type="Gene3D" id="3.40.50.800">
    <property type="entry name" value="Anticodon-binding domain"/>
    <property type="match status" value="1"/>
</dbReference>
<dbReference type="Gene3D" id="3.30.930.10">
    <property type="entry name" value="Bira Bifunctional Protein, Domain 2"/>
    <property type="match status" value="1"/>
</dbReference>
<dbReference type="Gene3D" id="3.30.980.10">
    <property type="entry name" value="Threonyl-trna Synthetase, Chain A, domain 2"/>
    <property type="match status" value="1"/>
</dbReference>
<dbReference type="HAMAP" id="MF_00184">
    <property type="entry name" value="Thr_tRNA_synth"/>
    <property type="match status" value="1"/>
</dbReference>
<dbReference type="InterPro" id="IPR002314">
    <property type="entry name" value="aa-tRNA-synt_IIb"/>
</dbReference>
<dbReference type="InterPro" id="IPR006195">
    <property type="entry name" value="aa-tRNA-synth_II"/>
</dbReference>
<dbReference type="InterPro" id="IPR045864">
    <property type="entry name" value="aa-tRNA-synth_II/BPL/LPL"/>
</dbReference>
<dbReference type="InterPro" id="IPR004154">
    <property type="entry name" value="Anticodon-bd"/>
</dbReference>
<dbReference type="InterPro" id="IPR036621">
    <property type="entry name" value="Anticodon-bd_dom_sf"/>
</dbReference>
<dbReference type="InterPro" id="IPR012675">
    <property type="entry name" value="Beta-grasp_dom_sf"/>
</dbReference>
<dbReference type="InterPro" id="IPR004095">
    <property type="entry name" value="TGS"/>
</dbReference>
<dbReference type="InterPro" id="IPR012676">
    <property type="entry name" value="TGS-like"/>
</dbReference>
<dbReference type="InterPro" id="IPR002320">
    <property type="entry name" value="Thr-tRNA-ligase_IIa"/>
</dbReference>
<dbReference type="InterPro" id="IPR018163">
    <property type="entry name" value="Thr/Ala-tRNA-synth_IIc_edit"/>
</dbReference>
<dbReference type="InterPro" id="IPR047246">
    <property type="entry name" value="ThrRS_anticodon"/>
</dbReference>
<dbReference type="InterPro" id="IPR033728">
    <property type="entry name" value="ThrRS_core"/>
</dbReference>
<dbReference type="InterPro" id="IPR012947">
    <property type="entry name" value="tRNA_SAD"/>
</dbReference>
<dbReference type="NCBIfam" id="TIGR00418">
    <property type="entry name" value="thrS"/>
    <property type="match status" value="1"/>
</dbReference>
<dbReference type="PANTHER" id="PTHR11451:SF56">
    <property type="entry name" value="THREONINE--TRNA LIGASE 1"/>
    <property type="match status" value="1"/>
</dbReference>
<dbReference type="PANTHER" id="PTHR11451">
    <property type="entry name" value="THREONINE-TRNA LIGASE"/>
    <property type="match status" value="1"/>
</dbReference>
<dbReference type="Pfam" id="PF03129">
    <property type="entry name" value="HGTP_anticodon"/>
    <property type="match status" value="1"/>
</dbReference>
<dbReference type="Pfam" id="PF02824">
    <property type="entry name" value="TGS"/>
    <property type="match status" value="1"/>
</dbReference>
<dbReference type="Pfam" id="PF00587">
    <property type="entry name" value="tRNA-synt_2b"/>
    <property type="match status" value="1"/>
</dbReference>
<dbReference type="Pfam" id="PF07973">
    <property type="entry name" value="tRNA_SAD"/>
    <property type="match status" value="1"/>
</dbReference>
<dbReference type="PRINTS" id="PR01047">
    <property type="entry name" value="TRNASYNTHTHR"/>
</dbReference>
<dbReference type="SMART" id="SM00863">
    <property type="entry name" value="tRNA_SAD"/>
    <property type="match status" value="1"/>
</dbReference>
<dbReference type="SUPFAM" id="SSF52954">
    <property type="entry name" value="Class II aaRS ABD-related"/>
    <property type="match status" value="1"/>
</dbReference>
<dbReference type="SUPFAM" id="SSF55681">
    <property type="entry name" value="Class II aaRS and biotin synthetases"/>
    <property type="match status" value="1"/>
</dbReference>
<dbReference type="SUPFAM" id="SSF81271">
    <property type="entry name" value="TGS-like"/>
    <property type="match status" value="1"/>
</dbReference>
<dbReference type="SUPFAM" id="SSF55186">
    <property type="entry name" value="ThrRS/AlaRS common domain"/>
    <property type="match status" value="1"/>
</dbReference>
<dbReference type="PROSITE" id="PS50862">
    <property type="entry name" value="AA_TRNA_LIGASE_II"/>
    <property type="match status" value="1"/>
</dbReference>
<dbReference type="PROSITE" id="PS51880">
    <property type="entry name" value="TGS"/>
    <property type="match status" value="1"/>
</dbReference>
<sequence length="647" mass="74319">MIKITFPDGAVREFESGVTTFDIAESISKSLAKKALAGKFNDQLIDTTRAIEEDGSIEIVTPDHKDAYEVLRHSAAHLFAQAAKRLFPNLHLGVGPAIAEGFYYDTDNTEGQISNEDLPRIEAEMQKIVTENYPCIREEVTKEEALELFKDDPYKVELINEHAGAGLTVYRQGEFVDLCRGPHVPSTGRIQVFHLLNVAGAYWRGNSDNNMMQRIYGTAWFDKKDLKAYLTRLEEAKERDHRKLGKELDLFMISQEVGQGLPFWLPDGATIRRTLERYITDKELASGYQHVYTPPLASVELYKTSGHWDHYQEDMFPVMDMGDGEEFVLRPMNCPHHIQVYKNHVRSYRELPIRIAELGMMHRYEKSGALSGLQRVREMTLNDGHIFVTPEQIQEEFQRALQLIIDVYADFNLTDYRFRLSYRDPNDTHKYYDNDEMWENAQSMLKAALDEMGVDYFEAEGEAAFYGPKLDIQVKTALGNEETLSTIQLDFLLPERFDLKYIGADGEEHRPVMIHRGVISTMERFTAILIETYKGAFPTWLAPHQVTVIPISNEAHIDYAWEVAKTLRDRGVRADVDDRNEKMQYKIRASQTSKIPYQLIVGDKEMEEKSVNVRRYGSKATHTESVEEFVENILADIARKSRPDAQA</sequence>
<name>SYT_STRPQ</name>
<protein>
    <recommendedName>
        <fullName evidence="1">Threonine--tRNA ligase</fullName>
        <ecNumber evidence="1">6.1.1.3</ecNumber>
    </recommendedName>
    <alternativeName>
        <fullName evidence="1">Threonyl-tRNA synthetase</fullName>
        <shortName evidence="1">ThrRS</shortName>
    </alternativeName>
</protein>
<accession>P0DG59</accession>
<accession>Q8K8C0</accession>
<gene>
    <name evidence="1" type="primary">thrS</name>
    <name type="ordered locus">SPs1488</name>
</gene>
<keyword id="KW-0030">Aminoacyl-tRNA synthetase</keyword>
<keyword id="KW-0067">ATP-binding</keyword>
<keyword id="KW-0963">Cytoplasm</keyword>
<keyword id="KW-0436">Ligase</keyword>
<keyword id="KW-0479">Metal-binding</keyword>
<keyword id="KW-0547">Nucleotide-binding</keyword>
<keyword id="KW-0648">Protein biosynthesis</keyword>
<keyword id="KW-0694">RNA-binding</keyword>
<keyword id="KW-0820">tRNA-binding</keyword>
<keyword id="KW-0862">Zinc</keyword>
<comment type="function">
    <text evidence="1">Catalyzes the attachment of threonine to tRNA(Thr) in a two-step reaction: L-threonine is first activated by ATP to form Thr-AMP and then transferred to the acceptor end of tRNA(Thr). Also edits incorrectly charged L-seryl-tRNA(Thr).</text>
</comment>
<comment type="catalytic activity">
    <reaction evidence="1">
        <text>tRNA(Thr) + L-threonine + ATP = L-threonyl-tRNA(Thr) + AMP + diphosphate + H(+)</text>
        <dbReference type="Rhea" id="RHEA:24624"/>
        <dbReference type="Rhea" id="RHEA-COMP:9670"/>
        <dbReference type="Rhea" id="RHEA-COMP:9704"/>
        <dbReference type="ChEBI" id="CHEBI:15378"/>
        <dbReference type="ChEBI" id="CHEBI:30616"/>
        <dbReference type="ChEBI" id="CHEBI:33019"/>
        <dbReference type="ChEBI" id="CHEBI:57926"/>
        <dbReference type="ChEBI" id="CHEBI:78442"/>
        <dbReference type="ChEBI" id="CHEBI:78534"/>
        <dbReference type="ChEBI" id="CHEBI:456215"/>
        <dbReference type="EC" id="6.1.1.3"/>
    </reaction>
</comment>
<comment type="cofactor">
    <cofactor evidence="1">
        <name>Zn(2+)</name>
        <dbReference type="ChEBI" id="CHEBI:29105"/>
    </cofactor>
    <text evidence="1">Binds 1 zinc ion per subunit.</text>
</comment>
<comment type="subunit">
    <text evidence="1">Homodimer.</text>
</comment>
<comment type="subcellular location">
    <subcellularLocation>
        <location evidence="1">Cytoplasm</location>
    </subcellularLocation>
</comment>
<comment type="similarity">
    <text evidence="1">Belongs to the class-II aminoacyl-tRNA synthetase family.</text>
</comment>
<proteinExistence type="inferred from homology"/>
<feature type="chain" id="PRO_0000411619" description="Threonine--tRNA ligase">
    <location>
        <begin position="1"/>
        <end position="647"/>
    </location>
</feature>
<feature type="domain" description="TGS" evidence="2">
    <location>
        <begin position="1"/>
        <end position="61"/>
    </location>
</feature>
<feature type="region of interest" description="Catalytic" evidence="1">
    <location>
        <begin position="240"/>
        <end position="538"/>
    </location>
</feature>
<feature type="binding site" evidence="1">
    <location>
        <position position="334"/>
    </location>
    <ligand>
        <name>Zn(2+)</name>
        <dbReference type="ChEBI" id="CHEBI:29105"/>
    </ligand>
</feature>
<feature type="binding site" evidence="1">
    <location>
        <position position="385"/>
    </location>
    <ligand>
        <name>Zn(2+)</name>
        <dbReference type="ChEBI" id="CHEBI:29105"/>
    </ligand>
</feature>
<feature type="binding site" evidence="1">
    <location>
        <position position="515"/>
    </location>
    <ligand>
        <name>Zn(2+)</name>
        <dbReference type="ChEBI" id="CHEBI:29105"/>
    </ligand>
</feature>
<reference key="1">
    <citation type="journal article" date="2003" name="Genome Res.">
        <title>Genome sequence of an M3 strain of Streptococcus pyogenes reveals a large-scale genomic rearrangement in invasive strains and new insights into phage evolution.</title>
        <authorList>
            <person name="Nakagawa I."/>
            <person name="Kurokawa K."/>
            <person name="Yamashita A."/>
            <person name="Nakata M."/>
            <person name="Tomiyasu Y."/>
            <person name="Okahashi N."/>
            <person name="Kawabata S."/>
            <person name="Yamazaki K."/>
            <person name="Shiba T."/>
            <person name="Yasunaga T."/>
            <person name="Hayashi H."/>
            <person name="Hattori M."/>
            <person name="Hamada S."/>
        </authorList>
    </citation>
    <scope>NUCLEOTIDE SEQUENCE [LARGE SCALE GENOMIC DNA]</scope>
    <source>
        <strain>SSI-1</strain>
    </source>
</reference>